<name>Y381_PSYIN</name>
<organism>
    <name type="scientific">Psychromonas ingrahamii (strain DSM 17664 / CCUG 51855 / 37)</name>
    <dbReference type="NCBI Taxonomy" id="357804"/>
    <lineage>
        <taxon>Bacteria</taxon>
        <taxon>Pseudomonadati</taxon>
        <taxon>Pseudomonadota</taxon>
        <taxon>Gammaproteobacteria</taxon>
        <taxon>Alteromonadales</taxon>
        <taxon>Psychromonadaceae</taxon>
        <taxon>Psychromonas</taxon>
    </lineage>
</organism>
<proteinExistence type="inferred from homology"/>
<feature type="chain" id="PRO_1000013023" description="UPF0145 protein Ping_0381">
    <location>
        <begin position="1"/>
        <end position="105"/>
    </location>
</feature>
<gene>
    <name type="ordered locus">Ping_0381</name>
</gene>
<protein>
    <recommendedName>
        <fullName evidence="1">UPF0145 protein Ping_0381</fullName>
    </recommendedName>
</protein>
<sequence length="105" mass="11100">MIYSTTETIPGKEITEIVGVVTGNVVQAKHIGRDIMAGLKSIVGGEIRGYTEMLTEARDLAIQRLVASANEKGADAVVGIRFTTSAIMDGSSEIMAFGTAVKLKK</sequence>
<comment type="similarity">
    <text evidence="1">Belongs to the UPF0145 family.</text>
</comment>
<reference key="1">
    <citation type="journal article" date="2008" name="BMC Genomics">
        <title>Genomics of an extreme psychrophile, Psychromonas ingrahamii.</title>
        <authorList>
            <person name="Riley M."/>
            <person name="Staley J.T."/>
            <person name="Danchin A."/>
            <person name="Wang T.Z."/>
            <person name="Brettin T.S."/>
            <person name="Hauser L.J."/>
            <person name="Land M.L."/>
            <person name="Thompson L.S."/>
        </authorList>
    </citation>
    <scope>NUCLEOTIDE SEQUENCE [LARGE SCALE GENOMIC DNA]</scope>
    <source>
        <strain>DSM 17664 / CCUG 51855 / 37</strain>
    </source>
</reference>
<evidence type="ECO:0000255" key="1">
    <source>
        <dbReference type="HAMAP-Rule" id="MF_00338"/>
    </source>
</evidence>
<accession>A1SRX7</accession>
<dbReference type="EMBL" id="CP000510">
    <property type="protein sequence ID" value="ABM02242.1"/>
    <property type="molecule type" value="Genomic_DNA"/>
</dbReference>
<dbReference type="RefSeq" id="WP_011768801.1">
    <property type="nucleotide sequence ID" value="NC_008709.1"/>
</dbReference>
<dbReference type="SMR" id="A1SRX7"/>
<dbReference type="STRING" id="357804.Ping_0381"/>
<dbReference type="KEGG" id="pin:Ping_0381"/>
<dbReference type="eggNOG" id="COG0393">
    <property type="taxonomic scope" value="Bacteria"/>
</dbReference>
<dbReference type="HOGENOM" id="CLU_117144_1_2_6"/>
<dbReference type="OrthoDB" id="9796448at2"/>
<dbReference type="Proteomes" id="UP000000639">
    <property type="component" value="Chromosome"/>
</dbReference>
<dbReference type="Gene3D" id="3.30.110.70">
    <property type="entry name" value="Hypothetical protein apc22750. Chain B"/>
    <property type="match status" value="1"/>
</dbReference>
<dbReference type="HAMAP" id="MF_00338">
    <property type="entry name" value="UPF0145"/>
    <property type="match status" value="1"/>
</dbReference>
<dbReference type="InterPro" id="IPR035439">
    <property type="entry name" value="UPF0145_dom_sf"/>
</dbReference>
<dbReference type="InterPro" id="IPR002765">
    <property type="entry name" value="UPF0145_YbjQ-like"/>
</dbReference>
<dbReference type="PANTHER" id="PTHR34068:SF2">
    <property type="entry name" value="UPF0145 PROTEIN SCO3412"/>
    <property type="match status" value="1"/>
</dbReference>
<dbReference type="PANTHER" id="PTHR34068">
    <property type="entry name" value="UPF0145 PROTEIN YBJQ"/>
    <property type="match status" value="1"/>
</dbReference>
<dbReference type="Pfam" id="PF01906">
    <property type="entry name" value="YbjQ_1"/>
    <property type="match status" value="1"/>
</dbReference>
<dbReference type="SUPFAM" id="SSF117782">
    <property type="entry name" value="YbjQ-like"/>
    <property type="match status" value="1"/>
</dbReference>
<keyword id="KW-1185">Reference proteome</keyword>